<accession>Q58906</accession>
<proteinExistence type="predicted"/>
<reference key="1">
    <citation type="journal article" date="1996" name="Science">
        <title>Complete genome sequence of the methanogenic archaeon, Methanococcus jannaschii.</title>
        <authorList>
            <person name="Bult C.J."/>
            <person name="White O."/>
            <person name="Olsen G.J."/>
            <person name="Zhou L."/>
            <person name="Fleischmann R.D."/>
            <person name="Sutton G.G."/>
            <person name="Blake J.A."/>
            <person name="FitzGerald L.M."/>
            <person name="Clayton R.A."/>
            <person name="Gocayne J.D."/>
            <person name="Kerlavage A.R."/>
            <person name="Dougherty B.A."/>
            <person name="Tomb J.-F."/>
            <person name="Adams M.D."/>
            <person name="Reich C.I."/>
            <person name="Overbeek R."/>
            <person name="Kirkness E.F."/>
            <person name="Weinstock K.G."/>
            <person name="Merrick J.M."/>
            <person name="Glodek A."/>
            <person name="Scott J.L."/>
            <person name="Geoghagen N.S.M."/>
            <person name="Weidman J.F."/>
            <person name="Fuhrmann J.L."/>
            <person name="Nguyen D."/>
            <person name="Utterback T.R."/>
            <person name="Kelley J.M."/>
            <person name="Peterson J.D."/>
            <person name="Sadow P.W."/>
            <person name="Hanna M.C."/>
            <person name="Cotton M.D."/>
            <person name="Roberts K.M."/>
            <person name="Hurst M.A."/>
            <person name="Kaine B.P."/>
            <person name="Borodovsky M."/>
            <person name="Klenk H.-P."/>
            <person name="Fraser C.M."/>
            <person name="Smith H.O."/>
            <person name="Woese C.R."/>
            <person name="Venter J.C."/>
        </authorList>
    </citation>
    <scope>NUCLEOTIDE SEQUENCE [LARGE SCALE GENOMIC DNA]</scope>
    <source>
        <strain>ATCC 43067 / DSM 2661 / JAL-1 / JCM 10045 / NBRC 100440</strain>
    </source>
</reference>
<keyword id="KW-1185">Reference proteome</keyword>
<dbReference type="EMBL" id="L77117">
    <property type="protein sequence ID" value="AAB99530.1"/>
    <property type="molecule type" value="Genomic_DNA"/>
</dbReference>
<dbReference type="PIR" id="F64488">
    <property type="entry name" value="F64488"/>
</dbReference>
<dbReference type="RefSeq" id="WP_010871034.1">
    <property type="nucleotide sequence ID" value="NC_000909.1"/>
</dbReference>
<dbReference type="SMR" id="Q58906"/>
<dbReference type="FunCoup" id="Q58906">
    <property type="interactions" value="1"/>
</dbReference>
<dbReference type="STRING" id="243232.MJ_1511"/>
<dbReference type="PaxDb" id="243232-MJ_1511"/>
<dbReference type="EnsemblBacteria" id="AAB99530">
    <property type="protein sequence ID" value="AAB99530"/>
    <property type="gene ID" value="MJ_1511"/>
</dbReference>
<dbReference type="GeneID" id="1452418"/>
<dbReference type="KEGG" id="mja:MJ_1511"/>
<dbReference type="eggNOG" id="arCOG02148">
    <property type="taxonomic scope" value="Archaea"/>
</dbReference>
<dbReference type="HOGENOM" id="CLU_137228_5_0_2"/>
<dbReference type="InParanoid" id="Q58906"/>
<dbReference type="OrthoDB" id="372807at2157"/>
<dbReference type="PhylomeDB" id="Q58906"/>
<dbReference type="Proteomes" id="UP000000805">
    <property type="component" value="Chromosome"/>
</dbReference>
<dbReference type="GO" id="GO:0016491">
    <property type="term" value="F:oxidoreductase activity"/>
    <property type="evidence" value="ECO:0000318"/>
    <property type="project" value="GO_Central"/>
</dbReference>
<dbReference type="GO" id="GO:0051920">
    <property type="term" value="F:peroxiredoxin activity"/>
    <property type="evidence" value="ECO:0007669"/>
    <property type="project" value="InterPro"/>
</dbReference>
<dbReference type="Gene3D" id="1.20.1290.10">
    <property type="entry name" value="AhpD-like"/>
    <property type="match status" value="1"/>
</dbReference>
<dbReference type="InterPro" id="IPR029032">
    <property type="entry name" value="AhpD-like"/>
</dbReference>
<dbReference type="InterPro" id="IPR003779">
    <property type="entry name" value="CMD-like"/>
</dbReference>
<dbReference type="PANTHER" id="PTHR33930">
    <property type="entry name" value="ALKYL HYDROPEROXIDE REDUCTASE AHPD"/>
    <property type="match status" value="1"/>
</dbReference>
<dbReference type="PANTHER" id="PTHR33930:SF2">
    <property type="entry name" value="BLR3452 PROTEIN"/>
    <property type="match status" value="1"/>
</dbReference>
<dbReference type="Pfam" id="PF02627">
    <property type="entry name" value="CMD"/>
    <property type="match status" value="1"/>
</dbReference>
<dbReference type="SUPFAM" id="SSF69118">
    <property type="entry name" value="AhpD-like"/>
    <property type="match status" value="1"/>
</dbReference>
<protein>
    <recommendedName>
        <fullName>Uncharacterized protein MJ1511</fullName>
    </recommendedName>
</protein>
<feature type="chain" id="PRO_0000107384" description="Uncharacterized protein MJ1511">
    <location>
        <begin position="1"/>
        <end position="107"/>
    </location>
</feature>
<name>Y1511_METJA</name>
<sequence length="107" mass="11891">MAEFVPAETIEVVKKNCPEFYEAVANLQKEVFSGKKLDEKMQRLVLLAVVATLGDEKAVKRQTKKLMEMGATIEEIQDVMKVVYIGAGMPRFIKAVEAILEVAGDQC</sequence>
<gene>
    <name type="ordered locus">MJ1511</name>
</gene>
<organism>
    <name type="scientific">Methanocaldococcus jannaschii (strain ATCC 43067 / DSM 2661 / JAL-1 / JCM 10045 / NBRC 100440)</name>
    <name type="common">Methanococcus jannaschii</name>
    <dbReference type="NCBI Taxonomy" id="243232"/>
    <lineage>
        <taxon>Archaea</taxon>
        <taxon>Methanobacteriati</taxon>
        <taxon>Methanobacteriota</taxon>
        <taxon>Methanomada group</taxon>
        <taxon>Methanococci</taxon>
        <taxon>Methanococcales</taxon>
        <taxon>Methanocaldococcaceae</taxon>
        <taxon>Methanocaldococcus</taxon>
    </lineage>
</organism>